<evidence type="ECO:0000255" key="1">
    <source>
        <dbReference type="HAMAP-Rule" id="MF_00212"/>
    </source>
</evidence>
<evidence type="ECO:0000256" key="2">
    <source>
        <dbReference type="SAM" id="MobiDB-lite"/>
    </source>
</evidence>
<proteinExistence type="inferred from homology"/>
<comment type="catalytic activity">
    <reaction evidence="1">
        <text>(S)-malate + a quinone = a quinol + oxaloacetate</text>
        <dbReference type="Rhea" id="RHEA:46012"/>
        <dbReference type="ChEBI" id="CHEBI:15589"/>
        <dbReference type="ChEBI" id="CHEBI:16452"/>
        <dbReference type="ChEBI" id="CHEBI:24646"/>
        <dbReference type="ChEBI" id="CHEBI:132124"/>
        <dbReference type="EC" id="1.1.5.4"/>
    </reaction>
</comment>
<comment type="cofactor">
    <cofactor evidence="1">
        <name>FAD</name>
        <dbReference type="ChEBI" id="CHEBI:57692"/>
    </cofactor>
</comment>
<comment type="pathway">
    <text evidence="1">Carbohydrate metabolism; tricarboxylic acid cycle; oxaloacetate from (S)-malate (quinone route): step 1/1.</text>
</comment>
<comment type="similarity">
    <text evidence="1">Belongs to the MQO family.</text>
</comment>
<reference key="1">
    <citation type="journal article" date="2009" name="J. Bacteriol.">
        <title>Genomic sequencing reveals regulatory mutations and recombinational events in the widely used MC4100 lineage of Escherichia coli K-12.</title>
        <authorList>
            <person name="Ferenci T."/>
            <person name="Zhou Z."/>
            <person name="Betteridge T."/>
            <person name="Ren Y."/>
            <person name="Liu Y."/>
            <person name="Feng L."/>
            <person name="Reeves P.R."/>
            <person name="Wang L."/>
        </authorList>
    </citation>
    <scope>NUCLEOTIDE SEQUENCE [LARGE SCALE GENOMIC DNA]</scope>
    <source>
        <strain>K12 / MC4100 / BW2952</strain>
    </source>
</reference>
<keyword id="KW-0274">FAD</keyword>
<keyword id="KW-0285">Flavoprotein</keyword>
<keyword id="KW-0560">Oxidoreductase</keyword>
<keyword id="KW-0816">Tricarboxylic acid cycle</keyword>
<organism>
    <name type="scientific">Escherichia coli (strain K12 / MC4100 / BW2952)</name>
    <dbReference type="NCBI Taxonomy" id="595496"/>
    <lineage>
        <taxon>Bacteria</taxon>
        <taxon>Pseudomonadati</taxon>
        <taxon>Pseudomonadota</taxon>
        <taxon>Gammaproteobacteria</taxon>
        <taxon>Enterobacterales</taxon>
        <taxon>Enterobacteriaceae</taxon>
        <taxon>Escherichia</taxon>
    </lineage>
</organism>
<dbReference type="EC" id="1.1.5.4" evidence="1"/>
<dbReference type="EMBL" id="CP001396">
    <property type="protein sequence ID" value="ACR63707.1"/>
    <property type="molecule type" value="Genomic_DNA"/>
</dbReference>
<dbReference type="RefSeq" id="WP_000758077.1">
    <property type="nucleotide sequence ID" value="NC_012759.1"/>
</dbReference>
<dbReference type="SMR" id="C4ZU53"/>
<dbReference type="KEGG" id="ebw:BWG_1984"/>
<dbReference type="HOGENOM" id="CLU_028151_0_0_6"/>
<dbReference type="UniPathway" id="UPA00223">
    <property type="reaction ID" value="UER01008"/>
</dbReference>
<dbReference type="GO" id="GO:0047545">
    <property type="term" value="F:2-hydroxyglutarate dehydrogenase activity"/>
    <property type="evidence" value="ECO:0007669"/>
    <property type="project" value="TreeGrafter"/>
</dbReference>
<dbReference type="GO" id="GO:0008924">
    <property type="term" value="F:L-malate dehydrogenase (quinone) activity"/>
    <property type="evidence" value="ECO:0007669"/>
    <property type="project" value="UniProtKB-UniRule"/>
</dbReference>
<dbReference type="GO" id="GO:0006099">
    <property type="term" value="P:tricarboxylic acid cycle"/>
    <property type="evidence" value="ECO:0007669"/>
    <property type="project" value="UniProtKB-UniRule"/>
</dbReference>
<dbReference type="Gene3D" id="3.30.9.10">
    <property type="entry name" value="D-Amino Acid Oxidase, subunit A, domain 2"/>
    <property type="match status" value="1"/>
</dbReference>
<dbReference type="Gene3D" id="3.50.50.60">
    <property type="entry name" value="FAD/NAD(P)-binding domain"/>
    <property type="match status" value="1"/>
</dbReference>
<dbReference type="HAMAP" id="MF_00212">
    <property type="entry name" value="MQO"/>
    <property type="match status" value="1"/>
</dbReference>
<dbReference type="InterPro" id="IPR036188">
    <property type="entry name" value="FAD/NAD-bd_sf"/>
</dbReference>
<dbReference type="InterPro" id="IPR006231">
    <property type="entry name" value="MQO"/>
</dbReference>
<dbReference type="NCBIfam" id="TIGR01320">
    <property type="entry name" value="mal_quin_oxido"/>
    <property type="match status" value="1"/>
</dbReference>
<dbReference type="NCBIfam" id="NF003603">
    <property type="entry name" value="PRK05257.1-1"/>
    <property type="match status" value="1"/>
</dbReference>
<dbReference type="NCBIfam" id="NF003605">
    <property type="entry name" value="PRK05257.1-4"/>
    <property type="match status" value="1"/>
</dbReference>
<dbReference type="NCBIfam" id="NF003606">
    <property type="entry name" value="PRK05257.2-1"/>
    <property type="match status" value="1"/>
</dbReference>
<dbReference type="NCBIfam" id="NF003608">
    <property type="entry name" value="PRK05257.2-4"/>
    <property type="match status" value="1"/>
</dbReference>
<dbReference type="NCBIfam" id="NF003611">
    <property type="entry name" value="PRK05257.3-2"/>
    <property type="match status" value="1"/>
</dbReference>
<dbReference type="NCBIfam" id="NF009875">
    <property type="entry name" value="PRK13339.1"/>
    <property type="match status" value="1"/>
</dbReference>
<dbReference type="PANTHER" id="PTHR43104">
    <property type="entry name" value="L-2-HYDROXYGLUTARATE DEHYDROGENASE, MITOCHONDRIAL"/>
    <property type="match status" value="1"/>
</dbReference>
<dbReference type="PANTHER" id="PTHR43104:SF2">
    <property type="entry name" value="L-2-HYDROXYGLUTARATE DEHYDROGENASE, MITOCHONDRIAL"/>
    <property type="match status" value="1"/>
</dbReference>
<dbReference type="Pfam" id="PF06039">
    <property type="entry name" value="Mqo"/>
    <property type="match status" value="1"/>
</dbReference>
<dbReference type="SUPFAM" id="SSF51905">
    <property type="entry name" value="FAD/NAD(P)-binding domain"/>
    <property type="match status" value="1"/>
</dbReference>
<name>MQO_ECOBW</name>
<feature type="chain" id="PRO_1000204197" description="Probable malate:quinone oxidoreductase">
    <location>
        <begin position="1"/>
        <end position="548"/>
    </location>
</feature>
<feature type="region of interest" description="Disordered" evidence="2">
    <location>
        <begin position="521"/>
        <end position="548"/>
    </location>
</feature>
<feature type="compositionally biased region" description="Low complexity" evidence="2">
    <location>
        <begin position="530"/>
        <end position="541"/>
    </location>
</feature>
<protein>
    <recommendedName>
        <fullName evidence="1">Probable malate:quinone oxidoreductase</fullName>
        <ecNumber evidence="1">1.1.5.4</ecNumber>
    </recommendedName>
    <alternativeName>
        <fullName evidence="1">MQO</fullName>
    </alternativeName>
    <alternativeName>
        <fullName evidence="1">Malate dehydrogenase [quinone]</fullName>
    </alternativeName>
</protein>
<sequence>MKKVTAMLFSMAVGLNAVSMAAKAKASEEQETDVLLIGGGIMSATLGTYLRELEPEWSMTMVERLEGVAQESSNGWNNAGTGHSALMELNYTPQNADGSISIEKAVAINEAFQISRQFWAHQVERGVLRTPRSFINTVPHMSFVWGEDNVNFLRARYAALQQSSLFRGMRYSEDHAQIKEWAPLVMEGRDPQQKVAATRTEIGTDVNYGEITRQLIASLQKKSNFSLQLSSEVRALKRNDDNTWTVTVADLKNGTAQNIRAKFVFIGAGGAALKLLQESGIPEAKDYAGFPVGGQFLVSENPDVVNHHLAKVYGKASVGAPPMSVPHIDTRVLDGKRVVLFGPFATFSTKFLKNGSLWDLMSSTTTSNVMPMMHVGLDNFDLVKYLVSQVMLSEEDRFEALKEYYPQAKKEDWRLWQAGQRVQIIKRDAEKGGVLRLGTEVVSDQQGTIAALLGASPGASTAAPIMLNLLEKVFGDRVSSPQWQATLKAIVPSYGRKLNGDVAATERELQYTSEVLGLNYDKPQAADSTPKPQLKPQPVQKEVADIAL</sequence>
<gene>
    <name evidence="1" type="primary">mqo</name>
    <name type="ordered locus">BWG_1984</name>
</gene>
<accession>C4ZU53</accession>